<proteinExistence type="inferred from homology"/>
<keyword id="KW-0963">Cytoplasm</keyword>
<keyword id="KW-0489">Methyltransferase</keyword>
<keyword id="KW-0698">rRNA processing</keyword>
<keyword id="KW-0949">S-adenosyl-L-methionine</keyword>
<keyword id="KW-0808">Transferase</keyword>
<gene>
    <name evidence="1" type="primary">rsmG</name>
    <name type="ordered locus">SG2406</name>
</gene>
<sequence>MLKRLESLLAQADMALTSAQKEKLLGYVALLHKWNKAYNLTSVRSPEQMLVRHIMDSIVVNPHLRGDRFIDVGTGPGLPGIPLAIVRPDAHFTLLDSLGKRICFLRQVQHELGLDNITAVQSRVESFAPPAGFDGVISRAFASLGDMLTWCAALPRKEEGRFYALKGQLSEEELNALPAGFRVESVIGLQVPCLEGERHIVVLAAN</sequence>
<reference key="1">
    <citation type="journal article" date="2006" name="Genome Res.">
        <title>Massive genome erosion and functional adaptations provide insights into the symbiotic lifestyle of Sodalis glossinidius in the tsetse host.</title>
        <authorList>
            <person name="Toh H."/>
            <person name="Weiss B.L."/>
            <person name="Perkin S.A.H."/>
            <person name="Yamashita A."/>
            <person name="Oshima K."/>
            <person name="Hattori M."/>
            <person name="Aksoy S."/>
        </authorList>
    </citation>
    <scope>NUCLEOTIDE SEQUENCE [LARGE SCALE GENOMIC DNA]</scope>
    <source>
        <strain>morsitans</strain>
    </source>
</reference>
<name>RSMG_SODGM</name>
<feature type="chain" id="PRO_1000010212" description="Ribosomal RNA small subunit methyltransferase G">
    <location>
        <begin position="1"/>
        <end position="206"/>
    </location>
</feature>
<feature type="binding site" evidence="1">
    <location>
        <position position="73"/>
    </location>
    <ligand>
        <name>S-adenosyl-L-methionine</name>
        <dbReference type="ChEBI" id="CHEBI:59789"/>
    </ligand>
</feature>
<feature type="binding site" evidence="1">
    <location>
        <position position="78"/>
    </location>
    <ligand>
        <name>S-adenosyl-L-methionine</name>
        <dbReference type="ChEBI" id="CHEBI:59789"/>
    </ligand>
</feature>
<feature type="binding site" evidence="1">
    <location>
        <begin position="124"/>
        <end position="125"/>
    </location>
    <ligand>
        <name>S-adenosyl-L-methionine</name>
        <dbReference type="ChEBI" id="CHEBI:59789"/>
    </ligand>
</feature>
<feature type="binding site" evidence="1">
    <location>
        <position position="139"/>
    </location>
    <ligand>
        <name>S-adenosyl-L-methionine</name>
        <dbReference type="ChEBI" id="CHEBI:59789"/>
    </ligand>
</feature>
<dbReference type="EC" id="2.1.1.170" evidence="1"/>
<dbReference type="EMBL" id="AP008232">
    <property type="protein sequence ID" value="BAE75681.1"/>
    <property type="molecule type" value="Genomic_DNA"/>
</dbReference>
<dbReference type="RefSeq" id="WP_011412212.1">
    <property type="nucleotide sequence ID" value="NC_007712.1"/>
</dbReference>
<dbReference type="SMR" id="Q2NQ94"/>
<dbReference type="STRING" id="343509.SG2406"/>
<dbReference type="KEGG" id="sgl:SG2406"/>
<dbReference type="eggNOG" id="COG0357">
    <property type="taxonomic scope" value="Bacteria"/>
</dbReference>
<dbReference type="HOGENOM" id="CLU_065341_2_2_6"/>
<dbReference type="OrthoDB" id="9808773at2"/>
<dbReference type="Proteomes" id="UP000001932">
    <property type="component" value="Chromosome"/>
</dbReference>
<dbReference type="GO" id="GO:0005829">
    <property type="term" value="C:cytosol"/>
    <property type="evidence" value="ECO:0007669"/>
    <property type="project" value="TreeGrafter"/>
</dbReference>
<dbReference type="GO" id="GO:0070043">
    <property type="term" value="F:rRNA (guanine-N7-)-methyltransferase activity"/>
    <property type="evidence" value="ECO:0007669"/>
    <property type="project" value="UniProtKB-UniRule"/>
</dbReference>
<dbReference type="CDD" id="cd02440">
    <property type="entry name" value="AdoMet_MTases"/>
    <property type="match status" value="1"/>
</dbReference>
<dbReference type="FunFam" id="3.40.50.150:FF:000032">
    <property type="entry name" value="Ribosomal RNA small subunit methyltransferase G"/>
    <property type="match status" value="1"/>
</dbReference>
<dbReference type="Gene3D" id="3.40.50.150">
    <property type="entry name" value="Vaccinia Virus protein VP39"/>
    <property type="match status" value="1"/>
</dbReference>
<dbReference type="HAMAP" id="MF_00074">
    <property type="entry name" value="16SrRNA_methyltr_G"/>
    <property type="match status" value="1"/>
</dbReference>
<dbReference type="InterPro" id="IPR003682">
    <property type="entry name" value="rRNA_ssu_MeTfrase_G"/>
</dbReference>
<dbReference type="InterPro" id="IPR029063">
    <property type="entry name" value="SAM-dependent_MTases_sf"/>
</dbReference>
<dbReference type="NCBIfam" id="TIGR00138">
    <property type="entry name" value="rsmG_gidB"/>
    <property type="match status" value="1"/>
</dbReference>
<dbReference type="PANTHER" id="PTHR31760">
    <property type="entry name" value="S-ADENOSYL-L-METHIONINE-DEPENDENT METHYLTRANSFERASES SUPERFAMILY PROTEIN"/>
    <property type="match status" value="1"/>
</dbReference>
<dbReference type="PANTHER" id="PTHR31760:SF0">
    <property type="entry name" value="S-ADENOSYL-L-METHIONINE-DEPENDENT METHYLTRANSFERASES SUPERFAMILY PROTEIN"/>
    <property type="match status" value="1"/>
</dbReference>
<dbReference type="Pfam" id="PF02527">
    <property type="entry name" value="GidB"/>
    <property type="match status" value="1"/>
</dbReference>
<dbReference type="PIRSF" id="PIRSF003078">
    <property type="entry name" value="GidB"/>
    <property type="match status" value="1"/>
</dbReference>
<dbReference type="SUPFAM" id="SSF53335">
    <property type="entry name" value="S-adenosyl-L-methionine-dependent methyltransferases"/>
    <property type="match status" value="1"/>
</dbReference>
<accession>Q2NQ94</accession>
<organism>
    <name type="scientific">Sodalis glossinidius (strain morsitans)</name>
    <dbReference type="NCBI Taxonomy" id="343509"/>
    <lineage>
        <taxon>Bacteria</taxon>
        <taxon>Pseudomonadati</taxon>
        <taxon>Pseudomonadota</taxon>
        <taxon>Gammaproteobacteria</taxon>
        <taxon>Enterobacterales</taxon>
        <taxon>Bruguierivoracaceae</taxon>
        <taxon>Sodalis</taxon>
    </lineage>
</organism>
<evidence type="ECO:0000255" key="1">
    <source>
        <dbReference type="HAMAP-Rule" id="MF_00074"/>
    </source>
</evidence>
<comment type="function">
    <text evidence="1">Specifically methylates the N7 position of guanine in position 527 of 16S rRNA.</text>
</comment>
<comment type="catalytic activity">
    <reaction evidence="1">
        <text>guanosine(527) in 16S rRNA + S-adenosyl-L-methionine = N(7)-methylguanosine(527) in 16S rRNA + S-adenosyl-L-homocysteine</text>
        <dbReference type="Rhea" id="RHEA:42732"/>
        <dbReference type="Rhea" id="RHEA-COMP:10209"/>
        <dbReference type="Rhea" id="RHEA-COMP:10210"/>
        <dbReference type="ChEBI" id="CHEBI:57856"/>
        <dbReference type="ChEBI" id="CHEBI:59789"/>
        <dbReference type="ChEBI" id="CHEBI:74269"/>
        <dbReference type="ChEBI" id="CHEBI:74480"/>
        <dbReference type="EC" id="2.1.1.170"/>
    </reaction>
</comment>
<comment type="subcellular location">
    <subcellularLocation>
        <location evidence="1">Cytoplasm</location>
    </subcellularLocation>
</comment>
<comment type="similarity">
    <text evidence="1">Belongs to the methyltransferase superfamily. RNA methyltransferase RsmG family.</text>
</comment>
<protein>
    <recommendedName>
        <fullName evidence="1">Ribosomal RNA small subunit methyltransferase G</fullName>
        <ecNumber evidence="1">2.1.1.170</ecNumber>
    </recommendedName>
    <alternativeName>
        <fullName evidence="1">16S rRNA 7-methylguanosine methyltransferase</fullName>
        <shortName evidence="1">16S rRNA m7G methyltransferase</shortName>
    </alternativeName>
</protein>